<organism>
    <name type="scientific">Drosophila yakuba</name>
    <name type="common">Fruit fly</name>
    <dbReference type="NCBI Taxonomy" id="7245"/>
    <lineage>
        <taxon>Eukaryota</taxon>
        <taxon>Metazoa</taxon>
        <taxon>Ecdysozoa</taxon>
        <taxon>Arthropoda</taxon>
        <taxon>Hexapoda</taxon>
        <taxon>Insecta</taxon>
        <taxon>Pterygota</taxon>
        <taxon>Neoptera</taxon>
        <taxon>Endopterygota</taxon>
        <taxon>Diptera</taxon>
        <taxon>Brachycera</taxon>
        <taxon>Muscomorpha</taxon>
        <taxon>Ephydroidea</taxon>
        <taxon>Drosophilidae</taxon>
        <taxon>Drosophila</taxon>
        <taxon>Sophophora</taxon>
    </lineage>
</organism>
<dbReference type="EMBL" id="CM000160">
    <property type="protein sequence ID" value="EDW97329.1"/>
    <property type="molecule type" value="Genomic_DNA"/>
</dbReference>
<dbReference type="SMR" id="B4PR07"/>
<dbReference type="EnsemblMetazoa" id="FBtr0270910">
    <property type="protein sequence ID" value="FBpp0269402"/>
    <property type="gene ID" value="FBgn0241512"/>
</dbReference>
<dbReference type="EnsemblMetazoa" id="XM_002097581.3">
    <property type="protein sequence ID" value="XP_002097617.1"/>
    <property type="gene ID" value="LOC6537052"/>
</dbReference>
<dbReference type="GeneID" id="6537052"/>
<dbReference type="KEGG" id="dya:Dyak_GE24392"/>
<dbReference type="CTD" id="7873"/>
<dbReference type="eggNOG" id="KOG4154">
    <property type="taxonomic scope" value="Eukaryota"/>
</dbReference>
<dbReference type="HOGENOM" id="CLU_099080_1_0_1"/>
<dbReference type="OMA" id="WSMPADK"/>
<dbReference type="OrthoDB" id="5597848at2759"/>
<dbReference type="PhylomeDB" id="B4PR07"/>
<dbReference type="ChiTaRS" id="Manf">
    <property type="organism name" value="fly"/>
</dbReference>
<dbReference type="Proteomes" id="UP000002282">
    <property type="component" value="Chromosome 3R"/>
</dbReference>
<dbReference type="GO" id="GO:0005783">
    <property type="term" value="C:endoplasmic reticulum"/>
    <property type="evidence" value="ECO:0007669"/>
    <property type="project" value="EnsemblMetazoa"/>
</dbReference>
<dbReference type="GO" id="GO:0005615">
    <property type="term" value="C:extracellular space"/>
    <property type="evidence" value="ECO:0007669"/>
    <property type="project" value="TreeGrafter"/>
</dbReference>
<dbReference type="GO" id="GO:0045202">
    <property type="term" value="C:synapse"/>
    <property type="evidence" value="ECO:0007669"/>
    <property type="project" value="GOC"/>
</dbReference>
<dbReference type="GO" id="GO:0042417">
    <property type="term" value="P:dopamine metabolic process"/>
    <property type="evidence" value="ECO:0007669"/>
    <property type="project" value="EnsemblMetazoa"/>
</dbReference>
<dbReference type="GO" id="GO:0071542">
    <property type="term" value="P:dopaminergic neuron differentiation"/>
    <property type="evidence" value="ECO:0007669"/>
    <property type="project" value="TreeGrafter"/>
</dbReference>
<dbReference type="GO" id="GO:0070050">
    <property type="term" value="P:neuron cellular homeostasis"/>
    <property type="evidence" value="ECO:0007669"/>
    <property type="project" value="EnsemblMetazoa"/>
</dbReference>
<dbReference type="GO" id="GO:0031175">
    <property type="term" value="P:neuron projection development"/>
    <property type="evidence" value="ECO:0007669"/>
    <property type="project" value="EnsemblMetazoa"/>
</dbReference>
<dbReference type="GO" id="GO:0001963">
    <property type="term" value="P:synaptic transmission, dopaminergic"/>
    <property type="evidence" value="ECO:0007669"/>
    <property type="project" value="EnsemblMetazoa"/>
</dbReference>
<dbReference type="FunFam" id="1.10.225.10:FF:000003">
    <property type="entry name" value="Mesencephalic astrocyte-derived neurotrophic factor"/>
    <property type="match status" value="1"/>
</dbReference>
<dbReference type="FunFam" id="1.10.720.30:FF:000003">
    <property type="entry name" value="Mesencephalic astrocyte-derived neurotrophic factor"/>
    <property type="match status" value="1"/>
</dbReference>
<dbReference type="Gene3D" id="1.10.720.30">
    <property type="entry name" value="SAP domain"/>
    <property type="match status" value="1"/>
</dbReference>
<dbReference type="Gene3D" id="1.10.225.10">
    <property type="entry name" value="Saposin-like"/>
    <property type="match status" value="1"/>
</dbReference>
<dbReference type="InterPro" id="IPR045333">
    <property type="entry name" value="ARMET-like"/>
</dbReference>
<dbReference type="InterPro" id="IPR019345">
    <property type="entry name" value="ARMET_C"/>
</dbReference>
<dbReference type="InterPro" id="IPR045332">
    <property type="entry name" value="ARMET_N"/>
</dbReference>
<dbReference type="InterPro" id="IPR018247">
    <property type="entry name" value="EF_Hand_1_Ca_BS"/>
</dbReference>
<dbReference type="InterPro" id="IPR036361">
    <property type="entry name" value="SAP_dom_sf"/>
</dbReference>
<dbReference type="PANTHER" id="PTHR12990">
    <property type="entry name" value="ARMET-LIKE PROTEIN"/>
    <property type="match status" value="1"/>
</dbReference>
<dbReference type="PANTHER" id="PTHR12990:SF5">
    <property type="entry name" value="MESENCEPHALIC ASTROCYTE-DERIVED NEUROTROPHIC FACTOR HOMOLOG"/>
    <property type="match status" value="1"/>
</dbReference>
<dbReference type="Pfam" id="PF10208">
    <property type="entry name" value="ARMET_C"/>
    <property type="match status" value="1"/>
</dbReference>
<dbReference type="Pfam" id="PF20145">
    <property type="entry name" value="ARMET_N"/>
    <property type="match status" value="1"/>
</dbReference>
<dbReference type="SUPFAM" id="SSF68906">
    <property type="entry name" value="SAP domain"/>
    <property type="match status" value="1"/>
</dbReference>
<keyword id="KW-0217">Developmental protein</keyword>
<keyword id="KW-1015">Disulfide bond</keyword>
<keyword id="KW-0964">Secreted</keyword>
<keyword id="KW-0732">Signal</keyword>
<evidence type="ECO:0000250" key="1">
    <source>
        <dbReference type="UniProtKB" id="P55145"/>
    </source>
</evidence>
<evidence type="ECO:0000250" key="2">
    <source>
        <dbReference type="UniProtKB" id="Q9XZ63"/>
    </source>
</evidence>
<evidence type="ECO:0000255" key="3"/>
<evidence type="ECO:0000312" key="4">
    <source>
        <dbReference type="EMBL" id="EDW97329.1"/>
    </source>
</evidence>
<name>ARMET_DROYA</name>
<accession>B4PR07</accession>
<feature type="signal peptide" evidence="3">
    <location>
        <begin position="1"/>
        <end position="22"/>
    </location>
</feature>
<feature type="chain" id="PRO_0000390948" description="Mesencephalic astrocyte-derived neurotrophic factor homolog">
    <location>
        <begin position="23"/>
        <end position="173"/>
    </location>
</feature>
<feature type="disulfide bond" evidence="1">
    <location>
        <begin position="28"/>
        <end position="114"/>
    </location>
</feature>
<feature type="disulfide bond" evidence="1">
    <location>
        <begin position="31"/>
        <end position="103"/>
    </location>
</feature>
<feature type="disulfide bond" evidence="1">
    <location>
        <begin position="61"/>
        <end position="72"/>
    </location>
</feature>
<feature type="disulfide bond" evidence="1">
    <location>
        <begin position="148"/>
        <end position="151"/>
    </location>
</feature>
<sequence>MKTWYMVVVIGFLATLVQTSLALKEEDCEVCVKTVRRFAESLDDSTKKDYKQIETAFKKFCKTQKNKEHRFCYYLGGLEESATGILNELSKPLSWSMPAEKICEKLKKKDAQICDLRYEKQIDLNSVDLKKLKVRDLKKILNDWDESCDGCLEKGDFIKRIEELKPKYSRSEL</sequence>
<reference evidence="4" key="1">
    <citation type="journal article" date="2007" name="Nature">
        <title>Evolution of genes and genomes on the Drosophila phylogeny.</title>
        <authorList>
            <consortium name="Drosophila 12 genomes consortium"/>
        </authorList>
    </citation>
    <scope>NUCLEOTIDE SEQUENCE [LARGE SCALE GENOMIC DNA]</scope>
    <source>
        <strain evidence="4">Tai18E2 / Tucson 14021-0261.01</strain>
    </source>
</reference>
<comment type="function">
    <text evidence="2">Required during the maturation of the embryonic nervous system for maintenance of neuronal and cuticular connectivity. Essential for maintenance of dopaminergic neurons and dopamine levels (By similarity).</text>
</comment>
<comment type="subcellular location">
    <subcellularLocation>
        <location evidence="2">Secreted</location>
    </subcellularLocation>
</comment>
<comment type="similarity">
    <text evidence="3">Belongs to the ARMET family.</text>
</comment>
<protein>
    <recommendedName>
        <fullName>Mesencephalic astrocyte-derived neurotrophic factor homolog</fullName>
    </recommendedName>
    <alternativeName>
        <fullName>MANF/CDNF-like protein</fullName>
    </alternativeName>
</protein>
<gene>
    <name evidence="2" type="primary">Manf</name>
    <name type="ORF">GE24392</name>
</gene>
<proteinExistence type="inferred from homology"/>